<protein>
    <recommendedName>
        <fullName>Genome polyprotein</fullName>
    </recommendedName>
    <component>
        <recommendedName>
            <fullName>P1 protease</fullName>
            <ecNumber>3.4.21.-</ecNumber>
        </recommendedName>
        <alternativeName>
            <fullName>Leader protease P1</fullName>
        </alternativeName>
        <alternativeName>
            <fullName>N-terminal protein</fullName>
        </alternativeName>
        <alternativeName>
            <fullName>P1 proteinase</fullName>
        </alternativeName>
    </component>
    <component>
        <recommendedName>
            <fullName>Helper component proteinase</fullName>
            <shortName>HC-pro</shortName>
            <ecNumber evidence="2">3.4.22.45</ecNumber>
        </recommendedName>
    </component>
    <component>
        <recommendedName>
            <fullName>Protein P3</fullName>
        </recommendedName>
    </component>
    <component>
        <recommendedName>
            <fullName>6 kDa protein 1</fullName>
            <shortName>6K1</shortName>
        </recommendedName>
    </component>
    <component>
        <recommendedName>
            <fullName>Cytoplasmic inclusion protein</fullName>
            <shortName>CI</shortName>
            <ecNumber>3.6.4.-</ecNumber>
        </recommendedName>
    </component>
    <component>
        <recommendedName>
            <fullName>6 kDa protein 2</fullName>
            <shortName>6K2</shortName>
        </recommendedName>
    </component>
    <component>
        <recommendedName>
            <fullName>Viral genome-linked protein</fullName>
        </recommendedName>
        <alternativeName>
            <fullName>VPg</fullName>
        </alternativeName>
    </component>
    <component>
        <recommendedName>
            <fullName>Nuclear inclusion protein A</fullName>
            <shortName>NI-a</shortName>
            <shortName>NIa</shortName>
            <ecNumber>3.4.22.44</ecNumber>
        </recommendedName>
        <alternativeName>
            <fullName>49 kDa proteinase</fullName>
            <shortName>49 kDa-Pro</shortName>
        </alternativeName>
        <alternativeName>
            <fullName>NIa-pro</fullName>
        </alternativeName>
    </component>
    <component>
        <recommendedName>
            <fullName>Nuclear inclusion protein B</fullName>
            <shortName>NI-b</shortName>
            <shortName>NIb</shortName>
            <ecNumber>2.7.7.48</ecNumber>
        </recommendedName>
        <alternativeName>
            <fullName>RNA-directed RNA polymerase</fullName>
        </alternativeName>
    </component>
    <component>
        <recommendedName>
            <fullName>Capsid protein</fullName>
            <shortName>CP</shortName>
        </recommendedName>
        <alternativeName>
            <fullName>Coat protein</fullName>
        </alternativeName>
    </component>
</protein>
<organism>
    <name type="scientific">Potato virus A</name>
    <name type="common">PVA</name>
    <dbReference type="NCBI Taxonomy" id="12215"/>
    <lineage>
        <taxon>Viruses</taxon>
        <taxon>Riboviria</taxon>
        <taxon>Orthornavirae</taxon>
        <taxon>Pisuviricota</taxon>
        <taxon>Stelpaviricetes</taxon>
        <taxon>Patatavirales</taxon>
        <taxon>Potyviridae</taxon>
        <taxon>Potyvirus</taxon>
    </lineage>
</organism>
<accession>Q85197</accession>
<organismHost>
    <name type="scientific">Solanum betaceum</name>
    <name type="common">Tamarillo</name>
    <name type="synonym">Cyphomandra betacea</name>
    <dbReference type="NCBI Taxonomy" id="45843"/>
</organismHost>
<organismHost>
    <name type="scientific">Solanum nigrum</name>
    <name type="common">Black nightshade</name>
    <dbReference type="NCBI Taxonomy" id="4112"/>
</organismHost>
<organismHost>
    <name type="scientific">Solanum tuberosum</name>
    <name type="common">Potato</name>
    <dbReference type="NCBI Taxonomy" id="4113"/>
</organismHost>
<name>POLG_PVMA</name>
<evidence type="ECO:0000250" key="1"/>
<evidence type="ECO:0000250" key="2">
    <source>
        <dbReference type="UniProtKB" id="P04517"/>
    </source>
</evidence>
<evidence type="ECO:0000250" key="3">
    <source>
        <dbReference type="UniProtKB" id="P09814"/>
    </source>
</evidence>
<evidence type="ECO:0000250" key="4">
    <source>
        <dbReference type="UniProtKB" id="P13529"/>
    </source>
</evidence>
<evidence type="ECO:0000250" key="5">
    <source>
        <dbReference type="UniProtKB" id="P17767"/>
    </source>
</evidence>
<evidence type="ECO:0000250" key="6">
    <source>
        <dbReference type="UniProtKB" id="P18247"/>
    </source>
</evidence>
<evidence type="ECO:0000250" key="7">
    <source>
        <dbReference type="UniProtKB" id="P21231"/>
    </source>
</evidence>
<evidence type="ECO:0000250" key="8">
    <source>
        <dbReference type="UniProtKB" id="P89509"/>
    </source>
</evidence>
<evidence type="ECO:0000255" key="9"/>
<evidence type="ECO:0000255" key="10">
    <source>
        <dbReference type="PROSITE-ProRule" id="PRU00539"/>
    </source>
</evidence>
<evidence type="ECO:0000255" key="11">
    <source>
        <dbReference type="PROSITE-ProRule" id="PRU00541"/>
    </source>
</evidence>
<evidence type="ECO:0000255" key="12">
    <source>
        <dbReference type="PROSITE-ProRule" id="PRU00542"/>
    </source>
</evidence>
<evidence type="ECO:0000255" key="13">
    <source>
        <dbReference type="PROSITE-ProRule" id="PRU00766"/>
    </source>
</evidence>
<evidence type="ECO:0000255" key="14">
    <source>
        <dbReference type="PROSITE-ProRule" id="PRU01080"/>
    </source>
</evidence>
<evidence type="ECO:0000255" key="15">
    <source>
        <dbReference type="PROSITE-ProRule" id="PRU01219"/>
    </source>
</evidence>
<evidence type="ECO:0000269" key="16">
    <source>
    </source>
</evidence>
<evidence type="ECO:0000269" key="17">
    <source>
    </source>
</evidence>
<evidence type="ECO:0000305" key="18"/>
<keyword id="KW-0067">ATP-binding</keyword>
<keyword id="KW-0167">Capsid protein</keyword>
<keyword id="KW-0191">Covalent protein-RNA linkage</keyword>
<keyword id="KW-1139">Helical capsid protein</keyword>
<keyword id="KW-0347">Helicase</keyword>
<keyword id="KW-1036">Host cytoplasmic vesicle</keyword>
<keyword id="KW-1048">Host nucleus</keyword>
<keyword id="KW-0945">Host-virus interaction</keyword>
<keyword id="KW-0378">Hydrolase</keyword>
<keyword id="KW-1090">Inhibition of host innate immune response by virus</keyword>
<keyword id="KW-0547">Nucleotide-binding</keyword>
<keyword id="KW-0548">Nucleotidyltransferase</keyword>
<keyword id="KW-0597">Phosphoprotein</keyword>
<keyword id="KW-0645">Protease</keyword>
<keyword id="KW-0688">Ribosomal frameshifting</keyword>
<keyword id="KW-0696">RNA-directed RNA polymerase</keyword>
<keyword id="KW-0720">Serine protease</keyword>
<keyword id="KW-0941">Suppressor of RNA silencing</keyword>
<keyword id="KW-0788">Thiol protease</keyword>
<keyword id="KW-0808">Transferase</keyword>
<keyword id="KW-0899">Viral immunoevasion</keyword>
<keyword id="KW-0693">Viral RNA replication</keyword>
<keyword id="KW-0946">Virion</keyword>
<reference key="1">
    <citation type="journal article" date="1994" name="J. Gen. Virol.">
        <title>The nucleotide sequence of potato virus A genomic RNA and its sequence similarities with otherpotyviruses.</title>
        <authorList>
            <person name="Puurand U."/>
            <person name="Makinen K."/>
            <person name="Paulin L."/>
            <person name="Saarma M."/>
        </authorList>
    </citation>
    <scope>NUCLEOTIDE SEQUENCE [GENOMIC RNA]</scope>
</reference>
<reference key="2">
    <citation type="journal article" date="1992" name="Virus Res.">
        <title>Nucleotide sequence of the 3'-terminal region of potato virus A RNA.</title>
        <authorList>
            <person name="Puurand U."/>
            <person name="Mkinen K."/>
            <person name="Baumann M."/>
            <person name="Saarma M."/>
        </authorList>
    </citation>
    <scope>NUCLEOTIDE SEQUENCE [GENOMIC RNA] OF 2667-3059</scope>
</reference>
<reference key="3">
    <citation type="journal article" date="2001" name="J. Biol. Chem.">
        <title>Phosphorylation down-regulates the RNA binding function of the coat protein of potato virus A.</title>
        <authorList>
            <person name="Ivanov K.I."/>
            <person name="Puustinen P."/>
            <person name="Merits A."/>
            <person name="Saarma M."/>
            <person name="Maekinen K."/>
        </authorList>
    </citation>
    <scope>PHOSPHORYLATION AT THR-3042</scope>
</reference>
<reference key="4">
    <citation type="journal article" date="2002" name="J. Gen. Virol.">
        <title>Proteolytic processing of potyviral proteins and polyprotein processing intermediates in insect and plant cells.</title>
        <authorList>
            <person name="Merits A."/>
            <person name="Rajamaeki M.-L."/>
            <person name="Lindholm P."/>
            <person name="Runeberg-Roos P."/>
            <person name="Kekarainen T."/>
            <person name="Puustinen P."/>
            <person name="Maekelaeinen K."/>
            <person name="Valkonen J.P.T."/>
            <person name="Saarma M."/>
        </authorList>
    </citation>
    <scope>PROTEOLYTIC PROCESSING (GENOME POLYPROTEIN)</scope>
</reference>
<reference key="5">
    <citation type="journal article" date="2001" name="Virus Res.">
        <title>Potyvirus proteins: a wealth of functions.</title>
        <authorList>
            <person name="Urcuqui-Inchima S."/>
            <person name="Haenni A.L."/>
            <person name="Bernardi F."/>
        </authorList>
    </citation>
    <scope>REVIEW</scope>
</reference>
<reference key="6">
    <citation type="journal article" date="2004" name="J. Biol. Chem.">
        <title>Uridylylation of the potyvirus VPg by viral replicase NIb correlates with the nucleotide binding capacity of VPg.</title>
        <authorList>
            <person name="Puustinen P."/>
            <person name="Makinen K."/>
        </authorList>
    </citation>
    <scope>COVALENT RNA LINKAGE (VIRAL GENOME-LINKED PROTEIN)</scope>
    <scope>URIDYLYLATION (VIRAL GENOME-LINKED PROTEIN)</scope>
</reference>
<proteinExistence type="evidence at protein level"/>
<dbReference type="EC" id="3.4.21.-"/>
<dbReference type="EC" id="3.4.22.45" evidence="2"/>
<dbReference type="EC" id="3.6.4.-"/>
<dbReference type="EC" id="3.4.22.44"/>
<dbReference type="EC" id="2.7.7.48"/>
<dbReference type="EMBL" id="Z21670">
    <property type="protein sequence ID" value="CAA79766.1"/>
    <property type="molecule type" value="Genomic_RNA"/>
</dbReference>
<dbReference type="MEROPS" id="C04.014"/>
<dbReference type="MEROPS" id="C06.001"/>
<dbReference type="Proteomes" id="UP000008484">
    <property type="component" value="Genome"/>
</dbReference>
<dbReference type="GO" id="GO:0019029">
    <property type="term" value="C:helical viral capsid"/>
    <property type="evidence" value="ECO:0007669"/>
    <property type="project" value="UniProtKB-KW"/>
</dbReference>
<dbReference type="GO" id="GO:0044161">
    <property type="term" value="C:host cell cytoplasmic vesicle"/>
    <property type="evidence" value="ECO:0007669"/>
    <property type="project" value="UniProtKB-SubCell"/>
</dbReference>
<dbReference type="GO" id="GO:0042025">
    <property type="term" value="C:host cell nucleus"/>
    <property type="evidence" value="ECO:0007669"/>
    <property type="project" value="UniProtKB-SubCell"/>
</dbReference>
<dbReference type="GO" id="GO:0005524">
    <property type="term" value="F:ATP binding"/>
    <property type="evidence" value="ECO:0007669"/>
    <property type="project" value="UniProtKB-KW"/>
</dbReference>
<dbReference type="GO" id="GO:0004197">
    <property type="term" value="F:cysteine-type endopeptidase activity"/>
    <property type="evidence" value="ECO:0007669"/>
    <property type="project" value="InterPro"/>
</dbReference>
<dbReference type="GO" id="GO:0004386">
    <property type="term" value="F:helicase activity"/>
    <property type="evidence" value="ECO:0007669"/>
    <property type="project" value="UniProtKB-KW"/>
</dbReference>
<dbReference type="GO" id="GO:0016818">
    <property type="term" value="F:hydrolase activity, acting on acid anhydrides, in phosphorus-containing anhydrides"/>
    <property type="evidence" value="ECO:0007669"/>
    <property type="project" value="InterPro"/>
</dbReference>
<dbReference type="GO" id="GO:0003723">
    <property type="term" value="F:RNA binding"/>
    <property type="evidence" value="ECO:0007669"/>
    <property type="project" value="InterPro"/>
</dbReference>
<dbReference type="GO" id="GO:0003968">
    <property type="term" value="F:RNA-directed RNA polymerase activity"/>
    <property type="evidence" value="ECO:0007669"/>
    <property type="project" value="UniProtKB-KW"/>
</dbReference>
<dbReference type="GO" id="GO:0008236">
    <property type="term" value="F:serine-type peptidase activity"/>
    <property type="evidence" value="ECO:0007669"/>
    <property type="project" value="UniProtKB-KW"/>
</dbReference>
<dbReference type="GO" id="GO:0005198">
    <property type="term" value="F:structural molecule activity"/>
    <property type="evidence" value="ECO:0007669"/>
    <property type="project" value="InterPro"/>
</dbReference>
<dbReference type="GO" id="GO:0006351">
    <property type="term" value="P:DNA-templated transcription"/>
    <property type="evidence" value="ECO:0007669"/>
    <property type="project" value="InterPro"/>
</dbReference>
<dbReference type="GO" id="GO:0006508">
    <property type="term" value="P:proteolysis"/>
    <property type="evidence" value="ECO:0007669"/>
    <property type="project" value="UniProtKB-KW"/>
</dbReference>
<dbReference type="GO" id="GO:0052170">
    <property type="term" value="P:symbiont-mediated suppression of host innate immune response"/>
    <property type="evidence" value="ECO:0007669"/>
    <property type="project" value="UniProtKB-KW"/>
</dbReference>
<dbReference type="GO" id="GO:0039694">
    <property type="term" value="P:viral RNA genome replication"/>
    <property type="evidence" value="ECO:0007669"/>
    <property type="project" value="InterPro"/>
</dbReference>
<dbReference type="GO" id="GO:0075523">
    <property type="term" value="P:viral translational frameshifting"/>
    <property type="evidence" value="ECO:0007669"/>
    <property type="project" value="UniProtKB-KW"/>
</dbReference>
<dbReference type="CDD" id="cd23175">
    <property type="entry name" value="ps-ssRNAv_Potyviridae_RdRp"/>
    <property type="match status" value="1"/>
</dbReference>
<dbReference type="Gene3D" id="3.30.70.270">
    <property type="match status" value="1"/>
</dbReference>
<dbReference type="Gene3D" id="3.90.70.150">
    <property type="entry name" value="Helper component proteinase"/>
    <property type="match status" value="1"/>
</dbReference>
<dbReference type="Gene3D" id="3.40.50.300">
    <property type="entry name" value="P-loop containing nucleotide triphosphate hydrolases"/>
    <property type="match status" value="2"/>
</dbReference>
<dbReference type="Gene3D" id="2.40.10.10">
    <property type="entry name" value="Trypsin-like serine proteases"/>
    <property type="match status" value="2"/>
</dbReference>
<dbReference type="InterPro" id="IPR011545">
    <property type="entry name" value="DEAD/DEAH_box_helicase_dom"/>
</dbReference>
<dbReference type="InterPro" id="IPR043502">
    <property type="entry name" value="DNA/RNA_pol_sf"/>
</dbReference>
<dbReference type="InterPro" id="IPR001456">
    <property type="entry name" value="HC-pro"/>
</dbReference>
<dbReference type="InterPro" id="IPR031159">
    <property type="entry name" value="HC_PRO_CPD_dom"/>
</dbReference>
<dbReference type="InterPro" id="IPR042308">
    <property type="entry name" value="HC_PRO_CPD_sf"/>
</dbReference>
<dbReference type="InterPro" id="IPR014001">
    <property type="entry name" value="Helicase_ATP-bd"/>
</dbReference>
<dbReference type="InterPro" id="IPR001650">
    <property type="entry name" value="Helicase_C-like"/>
</dbReference>
<dbReference type="InterPro" id="IPR027417">
    <property type="entry name" value="P-loop_NTPase"/>
</dbReference>
<dbReference type="InterPro" id="IPR002540">
    <property type="entry name" value="Pept_S30_P1_potyvir"/>
</dbReference>
<dbReference type="InterPro" id="IPR009003">
    <property type="entry name" value="Peptidase_S1_PA"/>
</dbReference>
<dbReference type="InterPro" id="IPR043504">
    <property type="entry name" value="Peptidase_S1_PA_chymotrypsin"/>
</dbReference>
<dbReference type="InterPro" id="IPR001592">
    <property type="entry name" value="Poty_coat"/>
</dbReference>
<dbReference type="InterPro" id="IPR001730">
    <property type="entry name" value="Potyv_NIa-pro_dom"/>
</dbReference>
<dbReference type="InterPro" id="IPR039560">
    <property type="entry name" value="Potyvirid-P3"/>
</dbReference>
<dbReference type="InterPro" id="IPR013648">
    <property type="entry name" value="PP_Potyviridae"/>
</dbReference>
<dbReference type="InterPro" id="IPR043128">
    <property type="entry name" value="Rev_trsase/Diguanyl_cyclase"/>
</dbReference>
<dbReference type="InterPro" id="IPR001205">
    <property type="entry name" value="RNA-dir_pol_C"/>
</dbReference>
<dbReference type="InterPro" id="IPR007094">
    <property type="entry name" value="RNA-dir_pol_PSvirus"/>
</dbReference>
<dbReference type="PANTHER" id="PTHR43519">
    <property type="entry name" value="ATP-DEPENDENT RNA HELICASE HRPB"/>
    <property type="match status" value="1"/>
</dbReference>
<dbReference type="PANTHER" id="PTHR43519:SF1">
    <property type="entry name" value="ATP-DEPENDENT RNA HELICASE HRPB"/>
    <property type="match status" value="1"/>
</dbReference>
<dbReference type="Pfam" id="PF00270">
    <property type="entry name" value="DEAD"/>
    <property type="match status" value="1"/>
</dbReference>
<dbReference type="Pfam" id="PF00271">
    <property type="entry name" value="Helicase_C"/>
    <property type="match status" value="1"/>
</dbReference>
<dbReference type="Pfam" id="PF00863">
    <property type="entry name" value="Peptidase_C4"/>
    <property type="match status" value="1"/>
</dbReference>
<dbReference type="Pfam" id="PF00851">
    <property type="entry name" value="Peptidase_C6"/>
    <property type="match status" value="1"/>
</dbReference>
<dbReference type="Pfam" id="PF01577">
    <property type="entry name" value="Peptidase_S30"/>
    <property type="match status" value="1"/>
</dbReference>
<dbReference type="Pfam" id="PF00767">
    <property type="entry name" value="Poty_coat"/>
    <property type="match status" value="1"/>
</dbReference>
<dbReference type="Pfam" id="PF08440">
    <property type="entry name" value="Poty_PP"/>
    <property type="match status" value="1"/>
</dbReference>
<dbReference type="Pfam" id="PF13608">
    <property type="entry name" value="Potyvirid-P3"/>
    <property type="match status" value="1"/>
</dbReference>
<dbReference type="Pfam" id="PF00680">
    <property type="entry name" value="RdRP_1"/>
    <property type="match status" value="1"/>
</dbReference>
<dbReference type="PRINTS" id="PR00966">
    <property type="entry name" value="NIAPOTYPTASE"/>
</dbReference>
<dbReference type="SMART" id="SM00487">
    <property type="entry name" value="DEXDc"/>
    <property type="match status" value="1"/>
</dbReference>
<dbReference type="SMART" id="SM00490">
    <property type="entry name" value="HELICc"/>
    <property type="match status" value="1"/>
</dbReference>
<dbReference type="SUPFAM" id="SSF56672">
    <property type="entry name" value="DNA/RNA polymerases"/>
    <property type="match status" value="1"/>
</dbReference>
<dbReference type="SUPFAM" id="SSF52540">
    <property type="entry name" value="P-loop containing nucleoside triphosphate hydrolases"/>
    <property type="match status" value="2"/>
</dbReference>
<dbReference type="SUPFAM" id="SSF50494">
    <property type="entry name" value="Trypsin-like serine proteases"/>
    <property type="match status" value="1"/>
</dbReference>
<dbReference type="PROSITE" id="PS51744">
    <property type="entry name" value="HC_PRO_CPD"/>
    <property type="match status" value="1"/>
</dbReference>
<dbReference type="PROSITE" id="PS51192">
    <property type="entry name" value="HELICASE_ATP_BIND_1"/>
    <property type="match status" value="1"/>
</dbReference>
<dbReference type="PROSITE" id="PS51194">
    <property type="entry name" value="HELICASE_CTER"/>
    <property type="match status" value="1"/>
</dbReference>
<dbReference type="PROSITE" id="PS51436">
    <property type="entry name" value="POTYVIRUS_NIA_PRO"/>
    <property type="match status" value="1"/>
</dbReference>
<dbReference type="PROSITE" id="PS51871">
    <property type="entry name" value="PV_P1_PRO"/>
    <property type="match status" value="1"/>
</dbReference>
<dbReference type="PROSITE" id="PS50507">
    <property type="entry name" value="RDRP_SSRNA_POS"/>
    <property type="match status" value="1"/>
</dbReference>
<comment type="function">
    <molecule>Helper component proteinase</molecule>
    <text evidence="2">Required for aphid transmission and also has proteolytic activity. Only cleaves a Gly-Gly dipeptide at its own C-terminus. Interacts with virions and aphid stylets. Acts as a suppressor of RNA-mediated gene silencing, also known as post-transcriptional gene silencing (PTGS), a mechanism of plant viral defense that limits the accumulation of viral RNAs. May have RNA-binding activity.</text>
</comment>
<comment type="function">
    <molecule>Cytoplasmic inclusion protein</molecule>
    <text>Has helicase activity. It may be involved in replication.</text>
</comment>
<comment type="function">
    <molecule>6 kDa protein 1</molecule>
    <text evidence="4 8">Indispensable for virus replication (By similarity). Reduces the abundance of host transcripts related to jasmonic acid biosynthesis therefore altering the host defenses (By similarity). In order to increase its own stability, decreases host protein degradation pathways (By similarity).</text>
</comment>
<comment type="function">
    <molecule>6 kDa protein 2</molecule>
    <text evidence="3">Indispensable for virus replication.</text>
</comment>
<comment type="function">
    <molecule>Viral genome-linked protein</molecule>
    <text evidence="6">Mediates the cap-independent, EIF4E-dependent translation of viral genomic RNAs (By similarity). Binds to the cap-binding site of host EIF4E and thus interferes with the host EIF4E-dependent mRNA export and translation (By similarity). VPg-RNA directly binds EIF4E and is a template for transcription (By similarity). Also forms trimeric complexes with EIF4E-EIF4G, which are templates for translation (By similarity).</text>
</comment>
<comment type="function">
    <molecule>Nuclear inclusion protein A</molecule>
    <text evidence="2">Has RNA-binding and proteolytic activities.</text>
</comment>
<comment type="function">
    <molecule>Nuclear inclusion protein B</molecule>
    <text>An RNA-dependent RNA polymerase that plays an essential role in the virus replication.</text>
</comment>
<comment type="function">
    <molecule>Capsid protein</molecule>
    <text evidence="2">Involved in aphid transmission, cell-to-cell and systemis movement, encapsidation of the viral RNA and in the regulation of viral RNA amplification.</text>
</comment>
<comment type="catalytic activity">
    <molecule>Nuclear inclusion protein B</molecule>
    <reaction evidence="10">
        <text>RNA(n) + a ribonucleoside 5'-triphosphate = RNA(n+1) + diphosphate</text>
        <dbReference type="Rhea" id="RHEA:21248"/>
        <dbReference type="Rhea" id="RHEA-COMP:14527"/>
        <dbReference type="Rhea" id="RHEA-COMP:17342"/>
        <dbReference type="ChEBI" id="CHEBI:33019"/>
        <dbReference type="ChEBI" id="CHEBI:61557"/>
        <dbReference type="ChEBI" id="CHEBI:140395"/>
        <dbReference type="EC" id="2.7.7.48"/>
    </reaction>
</comment>
<comment type="catalytic activity">
    <molecule>Nuclear inclusion protein A</molecule>
    <reaction evidence="2">
        <text>Hydrolyzes glutaminyl bonds, and activity is further restricted by preferences for the amino acids in P6 - P1' that vary with the species of potyvirus, e.g. Glu-Xaa-Xaa-Tyr-Xaa-Gln-|-(Ser or Gly) for the enzyme from tobacco etch virus. The natural substrate is the viral polyprotein, but other proteins and oligopeptides containing the appropriate consensus sequence are also cleaved.</text>
        <dbReference type="EC" id="3.4.22.44"/>
    </reaction>
</comment>
<comment type="catalytic activity">
    <molecule>Helper component proteinase</molecule>
    <reaction evidence="2">
        <text>Hydrolyzes a Gly-|-Gly bond at its own C-terminus, commonly in the sequence -Tyr-Xaa-Val-Gly-|-Gly, in the processing of the potyviral polyprotein.</text>
        <dbReference type="EC" id="3.4.22.45"/>
    </reaction>
</comment>
<comment type="subunit">
    <molecule>Viral genome-linked protein</molecule>
    <text evidence="6">Interacts with host eIF4E protein (via cap-binding region); this interaction mediates the translation of the VPg-viral RNA conjugates (By similarity). Part of a complex that comprises VPg, RNA, host EIF4E and EIF4G; this interaction mediates the translation of the VPg-viral RNA conjugates (By similarity).</text>
</comment>
<comment type="subcellular location">
    <molecule>6 kDa protein 1</molecule>
    <subcellularLocation>
        <location>Host cytoplasmic vesicle</location>
    </subcellularLocation>
    <text evidence="4">Probably colocalizes with 6K2-induced vesicles associated with host chloroplasts.</text>
</comment>
<comment type="subcellular location">
    <molecule>6 kDa protein 2</molecule>
    <subcellularLocation>
        <location evidence="3">Host cytoplasmic vesicle</location>
    </subcellularLocation>
    <text evidence="3">6K-induced vesicles associate with host chloroplasts.</text>
</comment>
<comment type="subcellular location">
    <molecule>Viral genome-linked protein</molecule>
    <subcellularLocation>
        <location evidence="7">Host nucleus</location>
    </subcellularLocation>
    <text evidence="7">Binds to host plant eIF4E proteins in the host nucleus.</text>
</comment>
<comment type="subcellular location">
    <molecule>Capsid protein</molecule>
    <subcellularLocation>
        <location evidence="18">Virion</location>
    </subcellularLocation>
</comment>
<comment type="alternative products">
    <event type="ribosomal frameshifting"/>
    <isoform>
        <id>Q85197-1</id>
        <name>Genome polyprotein</name>
        <sequence type="displayed"/>
    </isoform>
    <isoform>
        <id>P0CK05-1</id>
        <name>P3N-PIPO polyprotein</name>
        <sequence type="external"/>
    </isoform>
</comment>
<comment type="domain">
    <molecule>Helper component proteinase</molecule>
    <text>The N-terminus is involved in interaction with stylets. The central part is involved in interaction with virions and the C-terminus is involved in cell-to cell movement of the virus.</text>
</comment>
<comment type="PTM">
    <molecule>Viral genome-linked protein</molecule>
    <text evidence="17">VPg is uridylylated by the polymerase and is covalently attached to the 5'-end of the genomic RNA. This uridylylated form acts as a nucleotide-peptide primer for the polymerase.</text>
</comment>
<comment type="PTM">
    <molecule>Capsid protein</molecule>
    <text evidence="16">Phosphorylation inhibits the RNA-binding capacity of the capsid protein.</text>
</comment>
<comment type="PTM">
    <molecule>Genome polyprotein</molecule>
    <text evidence="1">Potyviral RNA is expressed as two polyproteins which undergo post-translational proteolytic processing. Genome polyprotein is processed by NIa-pro, P1 and HC-pro proteinases resulting in the production of at least ten individual proteins. P3N-PIPO polyprotein is cleaved by P1 and HC-pro proteinases resulting in the production of three individual proteins. The P1 proteinase and the HC-pro cleave only their respective C-termini autocatalytically. 6K1 is essential for proper proteolytic separation of P3 from CI (By similarity).</text>
</comment>
<comment type="miscellaneous">
    <text>6K1 and 6K2 are involved in infectivity, as their deletion renders PVA non-infectious.</text>
</comment>
<comment type="miscellaneous">
    <molecule>Isoform Genome polyprotein</molecule>
    <text>Produced by conventional translation.</text>
</comment>
<comment type="similarity">
    <text evidence="18">Belongs to the potyviridae genome polyprotein family.</text>
</comment>
<sequence>MATQVIMVGEFKILEVNCKPHAPVAAIHVPTQTPKTNDIKWADLEFTLAKSLQRQAHGVVKVDKHGTARIKRASKHHMSCLEQQMADEVAEKEAFMAAPTQLVTSIIFAGTTPPSMMETETIVKKIHTVGKRAKVMRKRSYITPPTDKSLRNHGVTPYSVQQLCRTLGNLSKRTGISLEVVGKTSKATKLRFTKTSFGHMARVQLKHHDGRMHRRDLVVDTSTTTIMQTLFLKTARTNANLDVLTHGSSGLVFWNYLVTGQRMRTRDNFIIVRGRCNGILVDARAKLSESTMLSTHHYSTGDVFWRGFNRTFLENKPINLDHVCSSDFSVEECGSIAALICQSLLPCGKITCRACAAKNLNMDEDTFKEFQTQRAREISAVIISEHPNFACVSQFIDRYFSHQRVLNPNVNAYREILKIVGGFTQSPYTHIQELNEILVLGGRATPEQLGSASAHLLEITRFVRNRTDNIKKGSLALFRNKISAKAHVNTALMCDNQLDRNGNLIWGERGYHAKRFFSNYFDIITPGGGYKQYIERRVPNGIRKLAIGNLIVTTNLEALREQLEGESIEKKAVTKACVSMSDNNYKYPCCCVTLDDGTPLYSTFIMPTKNHLVIGNSGDPKFLDLPADISTQMYIAKSGYCYINIFLAMLVNVDESDAKDFTKKVRDIIVPDLGEWPTLIDVATSCSLLSAFYPATSAAELPRILVDHDLKTMHVIDSYGSLNTGYHVLKANTIRQLIQFASNSLDSEMKHYRVGGTSNSQINGYATIKMLAKAVYRPKLMKEIIHEQPFMLVMSLMSPGILIALANSGALEMGIHHWIREGDSLVKMAHMLRTVAQNVSVARATWVQQEIISDSAQQMLETILNGTIPNVSYFQAIQYLTMLAASKEVDAEVRVTGYYTFKLQTSELLEKTYLSLLEDSWQELSYFGRFQAIRHSRRYCTAGTIVVKPERHVDLGGIYATSYQFALAKQMEYSKKAVCQAVNGLQARFNNITSQIYCKILNWPKRLFPDLVKFINTMLAITVALQLYIAFATILRHHQQCKQDSLELEYCKKERQLITLYDFFIAKQPYATEEEFMAHVDEQNPDLSNFAREYCAEVVLFQAKASEQVNFERIIAFISLVLMMFDRERSDCVYRSLTKLKSLMSTVENTVQFQSLDDIGPTLEEKNMTIDFDLDTDTIVGKSIIGHTFKEWWDVQLNTNRIVPHYRTEGHFMEFTRANAPTIAHQIAHDLHTDIMLRGAVGSGKSTGLPYHLSKKGTVLLLEPTRPLAENVTKQLKSDPFHVSPTLRMRGMAVFGSTPIHVMTTGFALHYLANNLKMLSTYDFIIIDEFHVHDSNAIALRNLLHEHNYQGKLIKVSATPPGREVEFSTQYPVEIRVEDQVSFQDFVKAQGNGSNLDLTSKCDNLLVYVASYNEVDQLSKLLLERHFLVTKVDGRSMKLGQVEIITKGSANKKHFIVATNIIENGVTLDIDAVIDFGMKVVPFLDSDNRMISYNKVSISYGERIQRLGRVGRNKAGVALRIGHTEKGISDVPVVIATQAAFLGFVYGLPISTQSVTTQVLSNVTLKQARTMVQFELPIFYMAHLVRYDGTMHPAIHNELKKYKLRDSEIQLRKLAIPSKCVPIWMTGKAYRLLTHNSQIPDDVRVPFLTKEIPDKLHENVWAIVEKFKCDAGIGRMTSAQASKVAYTLETDIHSVQRTILIIDQLLEREMQKQSHFEMVTNQSCSSGMLSLQTMMNAIQSRYAKNHTAGNIEILQRAKAQLLEFSNLSGDISTESALREFGYLEAVQFQSGTQVSNFLGLEGHWKKSLITKDLLIVGGVCVGAAWMIGEYFFKKSKGVVAFQGIISDRGKKLKFARARDEKMGHYVEAPDSTLEHYFGSAYTKKGKTKGKTHGMGKKNHRFVNMYGFDPSDYTFIRYVDPLTGYTLDESPYTDIRLIQSQFSDIREQQLLNDELERNMVHYKPGVQGYLVKDKTSQILKIDLTPHIPLKVCDATNNIAGHPDREGELRQTGKGQLLDYAELPQKKESVEFESTSMFRGVRDYNPISSVICQLENESEGRTTQLFGLGFGPFIITNQHLFVRNNGSLTVRSQMGVFKVNSTVALQMRPVEGRDVLIIKMPKDFPPFPQRLKFRQPTHSEKVCLILTNFQQKSSSSMVSETSILYQRKNTYFWKHWISTKEGHCGSPIVSTTDGAILGIHSLSNMTNTSNYFACFPKGFTETYLATESVHEWVKGWKFNANNVCWGSFHLQDSKPTKEFKTVKLVTDLLGEAVYTQGCDSKWLFNAAHTNIQAVAQLESNLVTKHTVKGKCKLFETYLNVDKAAHDFFSKYMGFYKPSKLNREAYTQDLMKYSKVIQVGEVDCGVFESALTGLLHNLGRWGFTTACYTTDEDSIYTALNMKAAVGALYRGKKRDYFDAMSPSEREHLLFLSCKRLYFGQLGVWNGSLKAELRPKEKVDLNKTRTFTAAPIETLLGGKVCVDDFNNMFYSLHLKAPWSVGMTKFYGTWNQLMCKLPDDWVYCDADGSQFDSSISPYMINAVLRIRLHFMEDWDIGSQMLQNLYTEIGTHQSQHQMAQLLKKFKGNNSGQPSTVVDNTLLVVLALHYALLKSGIPLEEQDSVCAYGVNGDDLLIAIRPDMEHKLDGFQALFSELGLNYEFNSRSKDKKDLWFMSHKAIQCGEILIPKLEEERIVSILEWDRSHEPIHRLEAICASMVESWGYPELTHEIRRFYAWVLEQSPYNALATTGLAPYIAESALKTLYTNVHPTSTELEKYSIQFDEQMDEEDDMVYFQAETLDASEALAQKSEGRKKERESNSSKAVAVKDKDVDLGTAGTHSVPRLKSMTSKLTLPMLKGKSVVNLDHLLSYKPKQVDLSNARATHEQFQNWYDGVMASYELEESSMEIILNGFMVWCIENGTSPDINGVWTMMDNEEQVSYPLKPMLDHAKPSLRQIMRHFSALAEAYIEMRSREKPYMPRYGLQRNLRDQSLARYAFDFYEITATTPIRAKEAHLQMKAAALKNSNTNMFGLDGNVTTSEEDTERHTATDVNRNMHHLLGVKGV</sequence>
<feature type="chain" id="PRO_0000420014" description="Genome polyprotein">
    <location>
        <begin position="1"/>
        <end position="3059"/>
    </location>
</feature>
<feature type="chain" id="PRO_0000040385" description="P1 protease" evidence="9">
    <location>
        <begin position="1"/>
        <end position="298"/>
    </location>
</feature>
<feature type="chain" id="PRO_0000040386" description="Helper component proteinase" evidence="9">
    <location>
        <begin position="299"/>
        <end position="755"/>
    </location>
</feature>
<feature type="chain" id="PRO_0000040387" description="Protein P3">
    <location>
        <begin position="756"/>
        <end position="1102"/>
    </location>
</feature>
<feature type="chain" id="PRO_0000040388" description="6 kDa protein 1">
    <location>
        <begin position="1103"/>
        <end position="1154"/>
    </location>
</feature>
<feature type="chain" id="PRO_0000040389" description="Cytoplasmic inclusion protein">
    <location>
        <begin position="1155"/>
        <end position="1789"/>
    </location>
</feature>
<feature type="chain" id="PRO_0000040390" description="6 kDa protein 2">
    <location>
        <begin position="1790"/>
        <end position="1842"/>
    </location>
</feature>
<feature type="chain" id="PRO_0000040391" description="Viral genome-linked protein">
    <location>
        <begin position="1843"/>
        <end position="2031"/>
    </location>
</feature>
<feature type="chain" id="PRO_0000040392" description="Nuclear inclusion protein A">
    <location>
        <begin position="2032"/>
        <end position="2274"/>
    </location>
</feature>
<feature type="chain" id="PRO_0000040393" description="Nuclear inclusion protein B">
    <location>
        <begin position="2275"/>
        <end position="2790"/>
    </location>
</feature>
<feature type="chain" id="PRO_0000040394" description="Capsid protein">
    <location>
        <begin position="2791"/>
        <end position="3059"/>
    </location>
</feature>
<feature type="domain" description="Peptidase S30" evidence="15">
    <location>
        <begin position="154"/>
        <end position="298"/>
    </location>
</feature>
<feature type="domain" description="Peptidase C6" evidence="14">
    <location>
        <begin position="633"/>
        <end position="755"/>
    </location>
</feature>
<feature type="domain" description="Helicase ATP-binding" evidence="11">
    <location>
        <begin position="1226"/>
        <end position="1378"/>
    </location>
</feature>
<feature type="domain" description="Helicase C-terminal" evidence="12">
    <location>
        <begin position="1397"/>
        <end position="1556"/>
    </location>
</feature>
<feature type="domain" description="Peptidase C4" evidence="13">
    <location>
        <begin position="2032"/>
        <end position="2250"/>
    </location>
</feature>
<feature type="domain" description="RdRp catalytic" evidence="10">
    <location>
        <begin position="2516"/>
        <end position="2640"/>
    </location>
</feature>
<feature type="short sequence motif" description="Involved in interaction with stylet and aphid transmission" evidence="1">
    <location>
        <begin position="349"/>
        <end position="352"/>
    </location>
</feature>
<feature type="short sequence motif" description="Involved in virions binding and aphid transmission" evidence="1">
    <location>
        <begin position="607"/>
        <end position="609"/>
    </location>
</feature>
<feature type="short sequence motif" description="DEFH box">
    <location>
        <begin position="1328"/>
        <end position="1331"/>
    </location>
</feature>
<feature type="short sequence motif" description="Nuclear localization signal" evidence="9">
    <location>
        <begin position="1883"/>
        <end position="1890"/>
    </location>
</feature>
<feature type="active site" description="For P1 proteinase activity" evidence="15">
    <location>
        <position position="207"/>
    </location>
</feature>
<feature type="active site" description="For P1 proteinase activity" evidence="15">
    <location>
        <position position="216"/>
    </location>
</feature>
<feature type="active site" description="For P1 proteinase activity" evidence="15">
    <location>
        <position position="249"/>
    </location>
</feature>
<feature type="active site" description="For helper component proteinase activity" evidence="14">
    <location>
        <position position="641"/>
    </location>
</feature>
<feature type="active site" description="For helper component proteinase activity" evidence="14">
    <location>
        <position position="714"/>
    </location>
</feature>
<feature type="active site" description="For nuclear inclusion protein A activity" evidence="13">
    <location>
        <position position="2077"/>
    </location>
</feature>
<feature type="active site" description="For nuclear inclusion protein A activity" evidence="13">
    <location>
        <position position="2112"/>
    </location>
</feature>
<feature type="active site" description="For nuclear inclusion protein A activity" evidence="13">
    <location>
        <position position="2182"/>
    </location>
</feature>
<feature type="binding site" evidence="11">
    <location>
        <begin position="1239"/>
        <end position="1246"/>
    </location>
    <ligand>
        <name>ATP</name>
        <dbReference type="ChEBI" id="CHEBI:30616"/>
    </ligand>
</feature>
<feature type="site" description="Cleavage; by P1 proteinase" evidence="15">
    <location>
        <begin position="298"/>
        <end position="299"/>
    </location>
</feature>
<feature type="site" description="Cleavage; by autolysis" evidence="14">
    <location>
        <begin position="755"/>
        <end position="756"/>
    </location>
</feature>
<feature type="site" description="Cleavage; by NIa-pro" evidence="6">
    <location>
        <begin position="1102"/>
        <end position="1103"/>
    </location>
</feature>
<feature type="site" description="Cleavage; by NIa-pro" evidence="6">
    <location>
        <begin position="1154"/>
        <end position="1155"/>
    </location>
</feature>
<feature type="site" description="Cleavage; by NIa-pro" evidence="6">
    <location>
        <begin position="1789"/>
        <end position="1790"/>
    </location>
</feature>
<feature type="site" description="Cleavage; by NIa-pro" evidence="6">
    <location>
        <begin position="1842"/>
        <end position="1843"/>
    </location>
</feature>
<feature type="site" description="Cleavage; by NIa-pro" evidence="6">
    <location>
        <begin position="2031"/>
        <end position="2032"/>
    </location>
</feature>
<feature type="site" description="Cleavage; by NIa-pro" evidence="6">
    <location>
        <begin position="2274"/>
        <end position="2275"/>
    </location>
</feature>
<feature type="site" description="Cleavage; by NIa-pro" evidence="6">
    <location>
        <begin position="2790"/>
        <end position="2791"/>
    </location>
</feature>
<feature type="modified residue" description="O-(5'-phospho-RNA)-tyrosine" evidence="3">
    <location>
        <position position="1905"/>
    </location>
</feature>
<feature type="modified residue" description="Phosphothreonine" evidence="5">
    <location>
        <position position="3042"/>
    </location>
</feature>